<reference key="1">
    <citation type="journal article" date="2006" name="J. Bacteriol.">
        <title>Comparison of the genome sequence of the poultry pathogen Bordetella avium with those of B. bronchiseptica, B. pertussis, and B. parapertussis reveals extensive diversity in surface structures associated with host interaction.</title>
        <authorList>
            <person name="Sebaihia M."/>
            <person name="Preston A."/>
            <person name="Maskell D.J."/>
            <person name="Kuzmiak H."/>
            <person name="Connell T.D."/>
            <person name="King N.D."/>
            <person name="Orndorff P.E."/>
            <person name="Miyamoto D.M."/>
            <person name="Thomson N.R."/>
            <person name="Harris D."/>
            <person name="Goble A."/>
            <person name="Lord A."/>
            <person name="Murphy L."/>
            <person name="Quail M.A."/>
            <person name="Rutter S."/>
            <person name="Squares R."/>
            <person name="Squares S."/>
            <person name="Woodward J."/>
            <person name="Parkhill J."/>
            <person name="Temple L.M."/>
        </authorList>
    </citation>
    <scope>NUCLEOTIDE SEQUENCE [LARGE SCALE GENOMIC DNA]</scope>
    <source>
        <strain>197N</strain>
    </source>
</reference>
<dbReference type="EC" id="6.1.1.5" evidence="1"/>
<dbReference type="EMBL" id="AM167904">
    <property type="protein sequence ID" value="CAJ49020.1"/>
    <property type="molecule type" value="Genomic_DNA"/>
</dbReference>
<dbReference type="RefSeq" id="WP_012417092.1">
    <property type="nucleotide sequence ID" value="NC_010645.1"/>
</dbReference>
<dbReference type="SMR" id="Q2L2K5"/>
<dbReference type="STRING" id="360910.BAV1411"/>
<dbReference type="KEGG" id="bav:BAV1411"/>
<dbReference type="eggNOG" id="COG0060">
    <property type="taxonomic scope" value="Bacteria"/>
</dbReference>
<dbReference type="HOGENOM" id="CLU_001493_7_1_4"/>
<dbReference type="OrthoDB" id="9810365at2"/>
<dbReference type="Proteomes" id="UP000001977">
    <property type="component" value="Chromosome"/>
</dbReference>
<dbReference type="GO" id="GO:0005829">
    <property type="term" value="C:cytosol"/>
    <property type="evidence" value="ECO:0007669"/>
    <property type="project" value="TreeGrafter"/>
</dbReference>
<dbReference type="GO" id="GO:0002161">
    <property type="term" value="F:aminoacyl-tRNA deacylase activity"/>
    <property type="evidence" value="ECO:0007669"/>
    <property type="project" value="InterPro"/>
</dbReference>
<dbReference type="GO" id="GO:0005524">
    <property type="term" value="F:ATP binding"/>
    <property type="evidence" value="ECO:0007669"/>
    <property type="project" value="UniProtKB-UniRule"/>
</dbReference>
<dbReference type="GO" id="GO:0004822">
    <property type="term" value="F:isoleucine-tRNA ligase activity"/>
    <property type="evidence" value="ECO:0007669"/>
    <property type="project" value="UniProtKB-UniRule"/>
</dbReference>
<dbReference type="GO" id="GO:0000049">
    <property type="term" value="F:tRNA binding"/>
    <property type="evidence" value="ECO:0007669"/>
    <property type="project" value="InterPro"/>
</dbReference>
<dbReference type="GO" id="GO:0008270">
    <property type="term" value="F:zinc ion binding"/>
    <property type="evidence" value="ECO:0007669"/>
    <property type="project" value="UniProtKB-UniRule"/>
</dbReference>
<dbReference type="GO" id="GO:0006428">
    <property type="term" value="P:isoleucyl-tRNA aminoacylation"/>
    <property type="evidence" value="ECO:0007669"/>
    <property type="project" value="UniProtKB-UniRule"/>
</dbReference>
<dbReference type="CDD" id="cd07960">
    <property type="entry name" value="Anticodon_Ia_Ile_BEm"/>
    <property type="match status" value="1"/>
</dbReference>
<dbReference type="CDD" id="cd00818">
    <property type="entry name" value="IleRS_core"/>
    <property type="match status" value="1"/>
</dbReference>
<dbReference type="FunFam" id="3.40.50.620:FF:000042">
    <property type="entry name" value="Isoleucine--tRNA ligase"/>
    <property type="match status" value="1"/>
</dbReference>
<dbReference type="FunFam" id="3.40.50.620:FF:000048">
    <property type="entry name" value="Isoleucine--tRNA ligase"/>
    <property type="match status" value="1"/>
</dbReference>
<dbReference type="Gene3D" id="1.10.730.20">
    <property type="match status" value="1"/>
</dbReference>
<dbReference type="Gene3D" id="3.40.50.620">
    <property type="entry name" value="HUPs"/>
    <property type="match status" value="2"/>
</dbReference>
<dbReference type="Gene3D" id="3.90.740.10">
    <property type="entry name" value="Valyl/Leucyl/Isoleucyl-tRNA synthetase, editing domain"/>
    <property type="match status" value="1"/>
</dbReference>
<dbReference type="HAMAP" id="MF_02002">
    <property type="entry name" value="Ile_tRNA_synth_type1"/>
    <property type="match status" value="1"/>
</dbReference>
<dbReference type="InterPro" id="IPR001412">
    <property type="entry name" value="aa-tRNA-synth_I_CS"/>
</dbReference>
<dbReference type="InterPro" id="IPR002300">
    <property type="entry name" value="aa-tRNA-synth_Ia"/>
</dbReference>
<dbReference type="InterPro" id="IPR033708">
    <property type="entry name" value="Anticodon_Ile_BEm"/>
</dbReference>
<dbReference type="InterPro" id="IPR002301">
    <property type="entry name" value="Ile-tRNA-ligase"/>
</dbReference>
<dbReference type="InterPro" id="IPR023585">
    <property type="entry name" value="Ile-tRNA-ligase_type1"/>
</dbReference>
<dbReference type="InterPro" id="IPR050081">
    <property type="entry name" value="Ile-tRNA_ligase"/>
</dbReference>
<dbReference type="InterPro" id="IPR013155">
    <property type="entry name" value="M/V/L/I-tRNA-synth_anticd-bd"/>
</dbReference>
<dbReference type="InterPro" id="IPR014729">
    <property type="entry name" value="Rossmann-like_a/b/a_fold"/>
</dbReference>
<dbReference type="InterPro" id="IPR009080">
    <property type="entry name" value="tRNAsynth_Ia_anticodon-bd"/>
</dbReference>
<dbReference type="InterPro" id="IPR009008">
    <property type="entry name" value="Val/Leu/Ile-tRNA-synth_edit"/>
</dbReference>
<dbReference type="InterPro" id="IPR010663">
    <property type="entry name" value="Znf_FPG/IleRS"/>
</dbReference>
<dbReference type="NCBIfam" id="TIGR00392">
    <property type="entry name" value="ileS"/>
    <property type="match status" value="1"/>
</dbReference>
<dbReference type="PANTHER" id="PTHR42765:SF1">
    <property type="entry name" value="ISOLEUCINE--TRNA LIGASE, MITOCHONDRIAL"/>
    <property type="match status" value="1"/>
</dbReference>
<dbReference type="PANTHER" id="PTHR42765">
    <property type="entry name" value="SOLEUCYL-TRNA SYNTHETASE"/>
    <property type="match status" value="1"/>
</dbReference>
<dbReference type="Pfam" id="PF08264">
    <property type="entry name" value="Anticodon_1"/>
    <property type="match status" value="1"/>
</dbReference>
<dbReference type="Pfam" id="PF00133">
    <property type="entry name" value="tRNA-synt_1"/>
    <property type="match status" value="1"/>
</dbReference>
<dbReference type="Pfam" id="PF06827">
    <property type="entry name" value="zf-FPG_IleRS"/>
    <property type="match status" value="1"/>
</dbReference>
<dbReference type="PRINTS" id="PR00984">
    <property type="entry name" value="TRNASYNTHILE"/>
</dbReference>
<dbReference type="SUPFAM" id="SSF47323">
    <property type="entry name" value="Anticodon-binding domain of a subclass of class I aminoacyl-tRNA synthetases"/>
    <property type="match status" value="1"/>
</dbReference>
<dbReference type="SUPFAM" id="SSF52374">
    <property type="entry name" value="Nucleotidylyl transferase"/>
    <property type="match status" value="1"/>
</dbReference>
<dbReference type="SUPFAM" id="SSF50677">
    <property type="entry name" value="ValRS/IleRS/LeuRS editing domain"/>
    <property type="match status" value="1"/>
</dbReference>
<dbReference type="PROSITE" id="PS00178">
    <property type="entry name" value="AA_TRNA_LIGASE_I"/>
    <property type="match status" value="1"/>
</dbReference>
<sequence>MDYKKTLNLPDTSFPMRGDLAKREPGWVQQWEENRVYQAIRAASKGRPLFILHDGPPYANGDIHIGHAVNKILKDIIVKSRSMAGYDAPYVPGWDCHGMPIEIQVEKKFGKNLPVTEVHAKARAYALEQLDRQRQDFKRLGVLGDWDNPYLTMNFSNEADEIRVLARILEKGYVFRGLKPVNWCFDCGSALAEAEVEYADRVDPAIDVAFPFTDKAALAGAFGLDSVDDGAIVIWTTTPWTIPSNQALNVHPEIEYALVRVSPTPVHGPLVLIAKERVEACLKTWGLEGEIIATAPGQALDGLRFAHPLARAAEGYDRTSPIYLGDYVTLDTGTGVVHSAPAYGIEDFVSCKNHGLADADILSPVMGDGKYIATLPLFGGLSIWDANPKIVEALKLAGSLMHVQKLSHSYMHCWRHKSPVIYRATSQWFAGMDVTPEGGGQTLRESALAGIEATTFYPAWGRARLQAMIANRPDWTLSRQRQWGVPMAFFVHKETGALHPRTVELLEEVAKRVEKSGIEAWQSLDPRELLGDEADSYEKNRDTLDVWFDSGSTHATVLGGKDHALHGSHGEQLAWPADLYLEGSDQHRGWFHSSLLTGCMLYGQPPYKGLLTHGFVVDGQGRKMSKSVGNVIAPQKVSDSLGAEILRLWVASTDYSGELSISDEILKRVVEGYRRIRNTLRFLLANVADFDGVNQAVPYGDLLEIDRYALVMTAQMQAEVQAHYQSYDFHPAVSRLQTFCSEDLGAFYLDILKDRLYTNAPGSHARRSAQTALLDITQTLVKLMAPILSFTAEEAWKVLADSALKHQADAARLTIFTEVYHTLPPYADADALAGRWGRLRAIRADVLRKLEDVRGEGLIGSSLQAEVDIYADGEDLALLSALGDDLRFVLIVSRATVHARAGELAIEIAPSAHKKCERCWHWRADVGQDADHPEICGRCVSNLFGAGESRAKA</sequence>
<evidence type="ECO:0000255" key="1">
    <source>
        <dbReference type="HAMAP-Rule" id="MF_02002"/>
    </source>
</evidence>
<feature type="chain" id="PRO_1000022043" description="Isoleucine--tRNA ligase">
    <location>
        <begin position="1"/>
        <end position="953"/>
    </location>
</feature>
<feature type="short sequence motif" description="'HIGH' region">
    <location>
        <begin position="57"/>
        <end position="67"/>
    </location>
</feature>
<feature type="short sequence motif" description="'KMSKS' region">
    <location>
        <begin position="623"/>
        <end position="627"/>
    </location>
</feature>
<feature type="binding site" evidence="1">
    <location>
        <position position="582"/>
    </location>
    <ligand>
        <name>L-isoleucyl-5'-AMP</name>
        <dbReference type="ChEBI" id="CHEBI:178002"/>
    </ligand>
</feature>
<feature type="binding site" evidence="1">
    <location>
        <position position="626"/>
    </location>
    <ligand>
        <name>ATP</name>
        <dbReference type="ChEBI" id="CHEBI:30616"/>
    </ligand>
</feature>
<feature type="binding site" evidence="1">
    <location>
        <position position="916"/>
    </location>
    <ligand>
        <name>Zn(2+)</name>
        <dbReference type="ChEBI" id="CHEBI:29105"/>
    </ligand>
</feature>
<feature type="binding site" evidence="1">
    <location>
        <position position="919"/>
    </location>
    <ligand>
        <name>Zn(2+)</name>
        <dbReference type="ChEBI" id="CHEBI:29105"/>
    </ligand>
</feature>
<feature type="binding site" evidence="1">
    <location>
        <position position="936"/>
    </location>
    <ligand>
        <name>Zn(2+)</name>
        <dbReference type="ChEBI" id="CHEBI:29105"/>
    </ligand>
</feature>
<feature type="binding site" evidence="1">
    <location>
        <position position="939"/>
    </location>
    <ligand>
        <name>Zn(2+)</name>
        <dbReference type="ChEBI" id="CHEBI:29105"/>
    </ligand>
</feature>
<gene>
    <name evidence="1" type="primary">ileS</name>
    <name type="ordered locus">BAV1411</name>
</gene>
<accession>Q2L2K5</accession>
<name>SYI_BORA1</name>
<keyword id="KW-0030">Aminoacyl-tRNA synthetase</keyword>
<keyword id="KW-0067">ATP-binding</keyword>
<keyword id="KW-0963">Cytoplasm</keyword>
<keyword id="KW-0436">Ligase</keyword>
<keyword id="KW-0479">Metal-binding</keyword>
<keyword id="KW-0547">Nucleotide-binding</keyword>
<keyword id="KW-0648">Protein biosynthesis</keyword>
<keyword id="KW-1185">Reference proteome</keyword>
<keyword id="KW-0862">Zinc</keyword>
<organism>
    <name type="scientific">Bordetella avium (strain 197N)</name>
    <dbReference type="NCBI Taxonomy" id="360910"/>
    <lineage>
        <taxon>Bacteria</taxon>
        <taxon>Pseudomonadati</taxon>
        <taxon>Pseudomonadota</taxon>
        <taxon>Betaproteobacteria</taxon>
        <taxon>Burkholderiales</taxon>
        <taxon>Alcaligenaceae</taxon>
        <taxon>Bordetella</taxon>
    </lineage>
</organism>
<protein>
    <recommendedName>
        <fullName evidence="1">Isoleucine--tRNA ligase</fullName>
        <ecNumber evidence="1">6.1.1.5</ecNumber>
    </recommendedName>
    <alternativeName>
        <fullName evidence="1">Isoleucyl-tRNA synthetase</fullName>
        <shortName evidence="1">IleRS</shortName>
    </alternativeName>
</protein>
<comment type="function">
    <text evidence="1">Catalyzes the attachment of isoleucine to tRNA(Ile). As IleRS can inadvertently accommodate and process structurally similar amino acids such as valine, to avoid such errors it has two additional distinct tRNA(Ile)-dependent editing activities. One activity is designated as 'pretransfer' editing and involves the hydrolysis of activated Val-AMP. The other activity is designated 'posttransfer' editing and involves deacylation of mischarged Val-tRNA(Ile).</text>
</comment>
<comment type="catalytic activity">
    <reaction evidence="1">
        <text>tRNA(Ile) + L-isoleucine + ATP = L-isoleucyl-tRNA(Ile) + AMP + diphosphate</text>
        <dbReference type="Rhea" id="RHEA:11060"/>
        <dbReference type="Rhea" id="RHEA-COMP:9666"/>
        <dbReference type="Rhea" id="RHEA-COMP:9695"/>
        <dbReference type="ChEBI" id="CHEBI:30616"/>
        <dbReference type="ChEBI" id="CHEBI:33019"/>
        <dbReference type="ChEBI" id="CHEBI:58045"/>
        <dbReference type="ChEBI" id="CHEBI:78442"/>
        <dbReference type="ChEBI" id="CHEBI:78528"/>
        <dbReference type="ChEBI" id="CHEBI:456215"/>
        <dbReference type="EC" id="6.1.1.5"/>
    </reaction>
</comment>
<comment type="cofactor">
    <cofactor evidence="1">
        <name>Zn(2+)</name>
        <dbReference type="ChEBI" id="CHEBI:29105"/>
    </cofactor>
    <text evidence="1">Binds 1 zinc ion per subunit.</text>
</comment>
<comment type="subunit">
    <text evidence="1">Monomer.</text>
</comment>
<comment type="subcellular location">
    <subcellularLocation>
        <location evidence="1">Cytoplasm</location>
    </subcellularLocation>
</comment>
<comment type="domain">
    <text evidence="1">IleRS has two distinct active sites: one for aminoacylation and one for editing. The misactivated valine is translocated from the active site to the editing site, which sterically excludes the correctly activated isoleucine. The single editing site contains two valyl binding pockets, one specific for each substrate (Val-AMP or Val-tRNA(Ile)).</text>
</comment>
<comment type="similarity">
    <text evidence="1">Belongs to the class-I aminoacyl-tRNA synthetase family. IleS type 1 subfamily.</text>
</comment>
<proteinExistence type="inferred from homology"/>